<evidence type="ECO:0000255" key="1">
    <source>
        <dbReference type="HAMAP-Rule" id="MF_00736"/>
    </source>
</evidence>
<evidence type="ECO:0000305" key="2"/>
<organism>
    <name type="scientific">Tropheryma whipplei (strain Twist)</name>
    <name type="common">Whipple's bacillus</name>
    <dbReference type="NCBI Taxonomy" id="203267"/>
    <lineage>
        <taxon>Bacteria</taxon>
        <taxon>Bacillati</taxon>
        <taxon>Actinomycetota</taxon>
        <taxon>Actinomycetes</taxon>
        <taxon>Micrococcales</taxon>
        <taxon>Tropherymataceae</taxon>
        <taxon>Tropheryma</taxon>
    </lineage>
</organism>
<sequence length="141" mass="14874">MADKKVVGVIKLQIQAGAANPAPPVGPALGQHGVNIMEFCKAYNAATESQKGNVIPVEISVYEDRSFTFVLKTPPVVELIKKAARISKGSPTPHNLKVAQITPEQVKSIAEAKMVDLNANDIDAASKIVRGTARSMGVTVA</sequence>
<proteinExistence type="inferred from homology"/>
<reference key="1">
    <citation type="journal article" date="2003" name="Genome Res.">
        <title>Tropheryma whipplei twist: a human pathogenic Actinobacteria with a reduced genome.</title>
        <authorList>
            <person name="Raoult D."/>
            <person name="Ogata H."/>
            <person name="Audic S."/>
            <person name="Robert C."/>
            <person name="Suhre K."/>
            <person name="Drancourt M."/>
            <person name="Claverie J.-M."/>
        </authorList>
    </citation>
    <scope>NUCLEOTIDE SEQUENCE [LARGE SCALE GENOMIC DNA]</scope>
    <source>
        <strain>Twist</strain>
    </source>
</reference>
<gene>
    <name evidence="1" type="primary">rplK</name>
    <name type="ordered locus">TWT_714</name>
</gene>
<comment type="function">
    <text evidence="1">Forms part of the ribosomal stalk which helps the ribosome interact with GTP-bound translation factors.</text>
</comment>
<comment type="subunit">
    <text evidence="1">Part of the ribosomal stalk of the 50S ribosomal subunit. Interacts with L10 and the large rRNA to form the base of the stalk. L10 forms an elongated spine to which L12 dimers bind in a sequential fashion forming a multimeric L10(L12)X complex.</text>
</comment>
<comment type="PTM">
    <text evidence="1">One or more lysine residues are methylated.</text>
</comment>
<comment type="similarity">
    <text evidence="1">Belongs to the universal ribosomal protein uL11 family.</text>
</comment>
<protein>
    <recommendedName>
        <fullName evidence="1">Large ribosomal subunit protein uL11</fullName>
    </recommendedName>
    <alternativeName>
        <fullName evidence="2">50S ribosomal protein L11</fullName>
    </alternativeName>
</protein>
<dbReference type="EMBL" id="AE014184">
    <property type="protein sequence ID" value="AAO44811.1"/>
    <property type="molecule type" value="Genomic_DNA"/>
</dbReference>
<dbReference type="RefSeq" id="WP_011096668.1">
    <property type="nucleotide sequence ID" value="NC_004572.3"/>
</dbReference>
<dbReference type="SMR" id="Q83FK8"/>
<dbReference type="STRING" id="203267.TWT_714"/>
<dbReference type="GeneID" id="67388508"/>
<dbReference type="KEGG" id="twh:TWT_714"/>
<dbReference type="eggNOG" id="COG0080">
    <property type="taxonomic scope" value="Bacteria"/>
</dbReference>
<dbReference type="HOGENOM" id="CLU_074237_2_1_11"/>
<dbReference type="OrthoDB" id="9802408at2"/>
<dbReference type="Proteomes" id="UP000002200">
    <property type="component" value="Chromosome"/>
</dbReference>
<dbReference type="GO" id="GO:0022625">
    <property type="term" value="C:cytosolic large ribosomal subunit"/>
    <property type="evidence" value="ECO:0007669"/>
    <property type="project" value="TreeGrafter"/>
</dbReference>
<dbReference type="GO" id="GO:0070180">
    <property type="term" value="F:large ribosomal subunit rRNA binding"/>
    <property type="evidence" value="ECO:0007669"/>
    <property type="project" value="UniProtKB-UniRule"/>
</dbReference>
<dbReference type="GO" id="GO:0003735">
    <property type="term" value="F:structural constituent of ribosome"/>
    <property type="evidence" value="ECO:0007669"/>
    <property type="project" value="InterPro"/>
</dbReference>
<dbReference type="GO" id="GO:0006412">
    <property type="term" value="P:translation"/>
    <property type="evidence" value="ECO:0007669"/>
    <property type="project" value="UniProtKB-UniRule"/>
</dbReference>
<dbReference type="CDD" id="cd00349">
    <property type="entry name" value="Ribosomal_L11"/>
    <property type="match status" value="1"/>
</dbReference>
<dbReference type="FunFam" id="1.10.10.250:FF:000001">
    <property type="entry name" value="50S ribosomal protein L11"/>
    <property type="match status" value="1"/>
</dbReference>
<dbReference type="FunFam" id="3.30.1550.10:FF:000001">
    <property type="entry name" value="50S ribosomal protein L11"/>
    <property type="match status" value="1"/>
</dbReference>
<dbReference type="Gene3D" id="1.10.10.250">
    <property type="entry name" value="Ribosomal protein L11, C-terminal domain"/>
    <property type="match status" value="1"/>
</dbReference>
<dbReference type="Gene3D" id="3.30.1550.10">
    <property type="entry name" value="Ribosomal protein L11/L12, N-terminal domain"/>
    <property type="match status" value="1"/>
</dbReference>
<dbReference type="HAMAP" id="MF_00736">
    <property type="entry name" value="Ribosomal_uL11"/>
    <property type="match status" value="1"/>
</dbReference>
<dbReference type="InterPro" id="IPR000911">
    <property type="entry name" value="Ribosomal_uL11"/>
</dbReference>
<dbReference type="InterPro" id="IPR006519">
    <property type="entry name" value="Ribosomal_uL11_bac-typ"/>
</dbReference>
<dbReference type="InterPro" id="IPR020783">
    <property type="entry name" value="Ribosomal_uL11_C"/>
</dbReference>
<dbReference type="InterPro" id="IPR036769">
    <property type="entry name" value="Ribosomal_uL11_C_sf"/>
</dbReference>
<dbReference type="InterPro" id="IPR020784">
    <property type="entry name" value="Ribosomal_uL11_N"/>
</dbReference>
<dbReference type="InterPro" id="IPR036796">
    <property type="entry name" value="Ribosomal_uL11_N_sf"/>
</dbReference>
<dbReference type="NCBIfam" id="TIGR01632">
    <property type="entry name" value="L11_bact"/>
    <property type="match status" value="1"/>
</dbReference>
<dbReference type="PANTHER" id="PTHR11661">
    <property type="entry name" value="60S RIBOSOMAL PROTEIN L12"/>
    <property type="match status" value="1"/>
</dbReference>
<dbReference type="PANTHER" id="PTHR11661:SF1">
    <property type="entry name" value="LARGE RIBOSOMAL SUBUNIT PROTEIN UL11M"/>
    <property type="match status" value="1"/>
</dbReference>
<dbReference type="Pfam" id="PF00298">
    <property type="entry name" value="Ribosomal_L11"/>
    <property type="match status" value="1"/>
</dbReference>
<dbReference type="Pfam" id="PF03946">
    <property type="entry name" value="Ribosomal_L11_N"/>
    <property type="match status" value="1"/>
</dbReference>
<dbReference type="SMART" id="SM00649">
    <property type="entry name" value="RL11"/>
    <property type="match status" value="1"/>
</dbReference>
<dbReference type="SUPFAM" id="SSF54747">
    <property type="entry name" value="Ribosomal L11/L12e N-terminal domain"/>
    <property type="match status" value="1"/>
</dbReference>
<dbReference type="SUPFAM" id="SSF46906">
    <property type="entry name" value="Ribosomal protein L11, C-terminal domain"/>
    <property type="match status" value="1"/>
</dbReference>
<feature type="chain" id="PRO_0000104405" description="Large ribosomal subunit protein uL11">
    <location>
        <begin position="1"/>
        <end position="141"/>
    </location>
</feature>
<accession>Q83FK8</accession>
<keyword id="KW-0488">Methylation</keyword>
<keyword id="KW-1185">Reference proteome</keyword>
<keyword id="KW-0687">Ribonucleoprotein</keyword>
<keyword id="KW-0689">Ribosomal protein</keyword>
<keyword id="KW-0694">RNA-binding</keyword>
<keyword id="KW-0699">rRNA-binding</keyword>
<name>RL11_TROWT</name>